<name>RL27_ROSS1</name>
<proteinExistence type="inferred from homology"/>
<sequence>MAHKKGVGSSRNGRDSNPKMLGVKRFGGERVQPGTIIVRQRGTKIKPGNNVGLGRDYTIYSLIEGVVTFEQHSRNQKRVSVYATE</sequence>
<evidence type="ECO:0000255" key="1">
    <source>
        <dbReference type="HAMAP-Rule" id="MF_00539"/>
    </source>
</evidence>
<evidence type="ECO:0000256" key="2">
    <source>
        <dbReference type="SAM" id="MobiDB-lite"/>
    </source>
</evidence>
<evidence type="ECO:0000305" key="3"/>
<accession>A5UWR7</accession>
<feature type="chain" id="PRO_1000017589" description="Large ribosomal subunit protein bL27">
    <location>
        <begin position="1"/>
        <end position="85"/>
    </location>
</feature>
<feature type="region of interest" description="Disordered" evidence="2">
    <location>
        <begin position="1"/>
        <end position="26"/>
    </location>
</feature>
<protein>
    <recommendedName>
        <fullName evidence="1">Large ribosomal subunit protein bL27</fullName>
    </recommendedName>
    <alternativeName>
        <fullName evidence="3">50S ribosomal protein L27</fullName>
    </alternativeName>
</protein>
<comment type="similarity">
    <text evidence="1">Belongs to the bacterial ribosomal protein bL27 family.</text>
</comment>
<keyword id="KW-0687">Ribonucleoprotein</keyword>
<keyword id="KW-0689">Ribosomal protein</keyword>
<gene>
    <name evidence="1" type="primary">rpmA</name>
    <name type="ordered locus">RoseRS_2696</name>
</gene>
<reference key="1">
    <citation type="submission" date="2007-04" db="EMBL/GenBank/DDBJ databases">
        <title>Complete sequence of Roseiflexus sp. RS-1.</title>
        <authorList>
            <consortium name="US DOE Joint Genome Institute"/>
            <person name="Copeland A."/>
            <person name="Lucas S."/>
            <person name="Lapidus A."/>
            <person name="Barry K."/>
            <person name="Detter J.C."/>
            <person name="Glavina del Rio T."/>
            <person name="Hammon N."/>
            <person name="Israni S."/>
            <person name="Dalin E."/>
            <person name="Tice H."/>
            <person name="Pitluck S."/>
            <person name="Chertkov O."/>
            <person name="Brettin T."/>
            <person name="Bruce D."/>
            <person name="Han C."/>
            <person name="Schmutz J."/>
            <person name="Larimer F."/>
            <person name="Land M."/>
            <person name="Hauser L."/>
            <person name="Kyrpides N."/>
            <person name="Mikhailova N."/>
            <person name="Bryant D.A."/>
            <person name="Richardson P."/>
        </authorList>
    </citation>
    <scope>NUCLEOTIDE SEQUENCE [LARGE SCALE GENOMIC DNA]</scope>
    <source>
        <strain>RS-1</strain>
    </source>
</reference>
<organism>
    <name type="scientific">Roseiflexus sp. (strain RS-1)</name>
    <dbReference type="NCBI Taxonomy" id="357808"/>
    <lineage>
        <taxon>Bacteria</taxon>
        <taxon>Bacillati</taxon>
        <taxon>Chloroflexota</taxon>
        <taxon>Chloroflexia</taxon>
        <taxon>Chloroflexales</taxon>
        <taxon>Roseiflexineae</taxon>
        <taxon>Roseiflexaceae</taxon>
        <taxon>Roseiflexus</taxon>
    </lineage>
</organism>
<dbReference type="EMBL" id="CP000686">
    <property type="protein sequence ID" value="ABQ91070.1"/>
    <property type="molecule type" value="Genomic_DNA"/>
</dbReference>
<dbReference type="RefSeq" id="WP_011957414.1">
    <property type="nucleotide sequence ID" value="NC_009523.1"/>
</dbReference>
<dbReference type="SMR" id="A5UWR7"/>
<dbReference type="STRING" id="357808.RoseRS_2696"/>
<dbReference type="KEGG" id="rrs:RoseRS_2696"/>
<dbReference type="eggNOG" id="COG0211">
    <property type="taxonomic scope" value="Bacteria"/>
</dbReference>
<dbReference type="HOGENOM" id="CLU_095424_4_0_0"/>
<dbReference type="OrthoDB" id="9803474at2"/>
<dbReference type="Proteomes" id="UP000006554">
    <property type="component" value="Chromosome"/>
</dbReference>
<dbReference type="GO" id="GO:0022625">
    <property type="term" value="C:cytosolic large ribosomal subunit"/>
    <property type="evidence" value="ECO:0007669"/>
    <property type="project" value="TreeGrafter"/>
</dbReference>
<dbReference type="GO" id="GO:0003735">
    <property type="term" value="F:structural constituent of ribosome"/>
    <property type="evidence" value="ECO:0007669"/>
    <property type="project" value="InterPro"/>
</dbReference>
<dbReference type="GO" id="GO:0006412">
    <property type="term" value="P:translation"/>
    <property type="evidence" value="ECO:0007669"/>
    <property type="project" value="UniProtKB-UniRule"/>
</dbReference>
<dbReference type="FunFam" id="2.40.50.100:FF:000004">
    <property type="entry name" value="50S ribosomal protein L27"/>
    <property type="match status" value="1"/>
</dbReference>
<dbReference type="Gene3D" id="2.40.50.100">
    <property type="match status" value="1"/>
</dbReference>
<dbReference type="HAMAP" id="MF_00539">
    <property type="entry name" value="Ribosomal_bL27"/>
    <property type="match status" value="1"/>
</dbReference>
<dbReference type="InterPro" id="IPR001684">
    <property type="entry name" value="Ribosomal_bL27"/>
</dbReference>
<dbReference type="InterPro" id="IPR018261">
    <property type="entry name" value="Ribosomal_bL27_CS"/>
</dbReference>
<dbReference type="NCBIfam" id="TIGR00062">
    <property type="entry name" value="L27"/>
    <property type="match status" value="1"/>
</dbReference>
<dbReference type="PANTHER" id="PTHR15893:SF0">
    <property type="entry name" value="LARGE RIBOSOMAL SUBUNIT PROTEIN BL27M"/>
    <property type="match status" value="1"/>
</dbReference>
<dbReference type="PANTHER" id="PTHR15893">
    <property type="entry name" value="RIBOSOMAL PROTEIN L27"/>
    <property type="match status" value="1"/>
</dbReference>
<dbReference type="Pfam" id="PF01016">
    <property type="entry name" value="Ribosomal_L27"/>
    <property type="match status" value="1"/>
</dbReference>
<dbReference type="PRINTS" id="PR00063">
    <property type="entry name" value="RIBOSOMALL27"/>
</dbReference>
<dbReference type="SUPFAM" id="SSF110324">
    <property type="entry name" value="Ribosomal L27 protein-like"/>
    <property type="match status" value="1"/>
</dbReference>
<dbReference type="PROSITE" id="PS00831">
    <property type="entry name" value="RIBOSOMAL_L27"/>
    <property type="match status" value="1"/>
</dbReference>